<dbReference type="EC" id="6.1.1.21" evidence="1"/>
<dbReference type="EMBL" id="BX640446">
    <property type="protein sequence ID" value="CAE33667.1"/>
    <property type="molecule type" value="Genomic_DNA"/>
</dbReference>
<dbReference type="SMR" id="Q7WHN1"/>
<dbReference type="KEGG" id="bbr:BB3175"/>
<dbReference type="eggNOG" id="COG0124">
    <property type="taxonomic scope" value="Bacteria"/>
</dbReference>
<dbReference type="HOGENOM" id="CLU_025113_1_1_4"/>
<dbReference type="Proteomes" id="UP000001027">
    <property type="component" value="Chromosome"/>
</dbReference>
<dbReference type="GO" id="GO:0005737">
    <property type="term" value="C:cytoplasm"/>
    <property type="evidence" value="ECO:0007669"/>
    <property type="project" value="UniProtKB-SubCell"/>
</dbReference>
<dbReference type="GO" id="GO:0005524">
    <property type="term" value="F:ATP binding"/>
    <property type="evidence" value="ECO:0007669"/>
    <property type="project" value="UniProtKB-UniRule"/>
</dbReference>
<dbReference type="GO" id="GO:0004821">
    <property type="term" value="F:histidine-tRNA ligase activity"/>
    <property type="evidence" value="ECO:0007669"/>
    <property type="project" value="UniProtKB-UniRule"/>
</dbReference>
<dbReference type="GO" id="GO:0006427">
    <property type="term" value="P:histidyl-tRNA aminoacylation"/>
    <property type="evidence" value="ECO:0007669"/>
    <property type="project" value="UniProtKB-UniRule"/>
</dbReference>
<dbReference type="CDD" id="cd00773">
    <property type="entry name" value="HisRS-like_core"/>
    <property type="match status" value="1"/>
</dbReference>
<dbReference type="CDD" id="cd00859">
    <property type="entry name" value="HisRS_anticodon"/>
    <property type="match status" value="1"/>
</dbReference>
<dbReference type="FunFam" id="3.30.930.10:FF:000005">
    <property type="entry name" value="Histidine--tRNA ligase"/>
    <property type="match status" value="1"/>
</dbReference>
<dbReference type="Gene3D" id="3.40.50.800">
    <property type="entry name" value="Anticodon-binding domain"/>
    <property type="match status" value="1"/>
</dbReference>
<dbReference type="Gene3D" id="3.30.930.10">
    <property type="entry name" value="Bira Bifunctional Protein, Domain 2"/>
    <property type="match status" value="1"/>
</dbReference>
<dbReference type="HAMAP" id="MF_00127">
    <property type="entry name" value="His_tRNA_synth"/>
    <property type="match status" value="1"/>
</dbReference>
<dbReference type="InterPro" id="IPR006195">
    <property type="entry name" value="aa-tRNA-synth_II"/>
</dbReference>
<dbReference type="InterPro" id="IPR045864">
    <property type="entry name" value="aa-tRNA-synth_II/BPL/LPL"/>
</dbReference>
<dbReference type="InterPro" id="IPR004154">
    <property type="entry name" value="Anticodon-bd"/>
</dbReference>
<dbReference type="InterPro" id="IPR036621">
    <property type="entry name" value="Anticodon-bd_dom_sf"/>
</dbReference>
<dbReference type="InterPro" id="IPR015807">
    <property type="entry name" value="His-tRNA-ligase"/>
</dbReference>
<dbReference type="InterPro" id="IPR041715">
    <property type="entry name" value="HisRS-like_core"/>
</dbReference>
<dbReference type="InterPro" id="IPR004516">
    <property type="entry name" value="HisRS/HisZ"/>
</dbReference>
<dbReference type="InterPro" id="IPR033656">
    <property type="entry name" value="HisRS_anticodon"/>
</dbReference>
<dbReference type="NCBIfam" id="TIGR00442">
    <property type="entry name" value="hisS"/>
    <property type="match status" value="1"/>
</dbReference>
<dbReference type="PANTHER" id="PTHR43707:SF1">
    <property type="entry name" value="HISTIDINE--TRNA LIGASE, MITOCHONDRIAL-RELATED"/>
    <property type="match status" value="1"/>
</dbReference>
<dbReference type="PANTHER" id="PTHR43707">
    <property type="entry name" value="HISTIDYL-TRNA SYNTHETASE"/>
    <property type="match status" value="1"/>
</dbReference>
<dbReference type="Pfam" id="PF03129">
    <property type="entry name" value="HGTP_anticodon"/>
    <property type="match status" value="1"/>
</dbReference>
<dbReference type="Pfam" id="PF13393">
    <property type="entry name" value="tRNA-synt_His"/>
    <property type="match status" value="1"/>
</dbReference>
<dbReference type="PIRSF" id="PIRSF001549">
    <property type="entry name" value="His-tRNA_synth"/>
    <property type="match status" value="1"/>
</dbReference>
<dbReference type="SUPFAM" id="SSF52954">
    <property type="entry name" value="Class II aaRS ABD-related"/>
    <property type="match status" value="1"/>
</dbReference>
<dbReference type="SUPFAM" id="SSF55681">
    <property type="entry name" value="Class II aaRS and biotin synthetases"/>
    <property type="match status" value="1"/>
</dbReference>
<dbReference type="PROSITE" id="PS50862">
    <property type="entry name" value="AA_TRNA_LIGASE_II"/>
    <property type="match status" value="1"/>
</dbReference>
<name>SYH_BORBR</name>
<protein>
    <recommendedName>
        <fullName evidence="1">Histidine--tRNA ligase</fullName>
        <ecNumber evidence="1">6.1.1.21</ecNumber>
    </recommendedName>
    <alternativeName>
        <fullName evidence="1">Histidyl-tRNA synthetase</fullName>
        <shortName evidence="1">HisRS</shortName>
    </alternativeName>
</protein>
<sequence length="428" mass="47788">MTQVFQKVSAIRGMNDVLPGPSARWEKFEEIVRGWLRSYGYRNVRTPVLEHTRLFARGIGEVTDIVEKEMYTFTDALNGDSLTMRPEMTAGIVRASIEHNMLYDRPHRVYAIGPVFRHERPQRGRYRQFHQIDVEALGFAGPDVDAEMIVMLARLWKLLGLQDVRLELNSLGQPAERAAHRAALIEHLERHQDILDEDGRRRMYSNPLRVLDTKNPAMQEMADSAPRLFDFLGEESRSHFDGLCQRLADAGIEYRLNPRLVRGLDYYNLTVFEWVTDRLGAQGTVCGGGRYDGLVELLGGKPAPAVGFAIGMERLLDLWEQSVEIEQPAECEVYIVHQGEEGQRLAARVGEQLRDAGLDVIVHAGAAGFKAQFKRADASGARIAVILGGDEVASRTASIKHLRGPVGADAAQQQVPLAQLADVLKSKG</sequence>
<keyword id="KW-0030">Aminoacyl-tRNA synthetase</keyword>
<keyword id="KW-0067">ATP-binding</keyword>
<keyword id="KW-0963">Cytoplasm</keyword>
<keyword id="KW-0436">Ligase</keyword>
<keyword id="KW-0547">Nucleotide-binding</keyword>
<keyword id="KW-0648">Protein biosynthesis</keyword>
<organism>
    <name type="scientific">Bordetella bronchiseptica (strain ATCC BAA-588 / NCTC 13252 / RB50)</name>
    <name type="common">Alcaligenes bronchisepticus</name>
    <dbReference type="NCBI Taxonomy" id="257310"/>
    <lineage>
        <taxon>Bacteria</taxon>
        <taxon>Pseudomonadati</taxon>
        <taxon>Pseudomonadota</taxon>
        <taxon>Betaproteobacteria</taxon>
        <taxon>Burkholderiales</taxon>
        <taxon>Alcaligenaceae</taxon>
        <taxon>Bordetella</taxon>
    </lineage>
</organism>
<gene>
    <name evidence="1" type="primary">hisS</name>
    <name type="ordered locus">BB3175</name>
</gene>
<reference key="1">
    <citation type="journal article" date="2003" name="Nat. Genet.">
        <title>Comparative analysis of the genome sequences of Bordetella pertussis, Bordetella parapertussis and Bordetella bronchiseptica.</title>
        <authorList>
            <person name="Parkhill J."/>
            <person name="Sebaihia M."/>
            <person name="Preston A."/>
            <person name="Murphy L.D."/>
            <person name="Thomson N.R."/>
            <person name="Harris D.E."/>
            <person name="Holden M.T.G."/>
            <person name="Churcher C.M."/>
            <person name="Bentley S.D."/>
            <person name="Mungall K.L."/>
            <person name="Cerdeno-Tarraga A.-M."/>
            <person name="Temple L."/>
            <person name="James K.D."/>
            <person name="Harris B."/>
            <person name="Quail M.A."/>
            <person name="Achtman M."/>
            <person name="Atkin R."/>
            <person name="Baker S."/>
            <person name="Basham D."/>
            <person name="Bason N."/>
            <person name="Cherevach I."/>
            <person name="Chillingworth T."/>
            <person name="Collins M."/>
            <person name="Cronin A."/>
            <person name="Davis P."/>
            <person name="Doggett J."/>
            <person name="Feltwell T."/>
            <person name="Goble A."/>
            <person name="Hamlin N."/>
            <person name="Hauser H."/>
            <person name="Holroyd S."/>
            <person name="Jagels K."/>
            <person name="Leather S."/>
            <person name="Moule S."/>
            <person name="Norberczak H."/>
            <person name="O'Neil S."/>
            <person name="Ormond D."/>
            <person name="Price C."/>
            <person name="Rabbinowitsch E."/>
            <person name="Rutter S."/>
            <person name="Sanders M."/>
            <person name="Saunders D."/>
            <person name="Seeger K."/>
            <person name="Sharp S."/>
            <person name="Simmonds M."/>
            <person name="Skelton J."/>
            <person name="Squares R."/>
            <person name="Squares S."/>
            <person name="Stevens K."/>
            <person name="Unwin L."/>
            <person name="Whitehead S."/>
            <person name="Barrell B.G."/>
            <person name="Maskell D.J."/>
        </authorList>
    </citation>
    <scope>NUCLEOTIDE SEQUENCE [LARGE SCALE GENOMIC DNA]</scope>
    <source>
        <strain>ATCC BAA-588 / NCTC 13252 / RB50</strain>
    </source>
</reference>
<proteinExistence type="inferred from homology"/>
<evidence type="ECO:0000255" key="1">
    <source>
        <dbReference type="HAMAP-Rule" id="MF_00127"/>
    </source>
</evidence>
<comment type="catalytic activity">
    <reaction evidence="1">
        <text>tRNA(His) + L-histidine + ATP = L-histidyl-tRNA(His) + AMP + diphosphate + H(+)</text>
        <dbReference type="Rhea" id="RHEA:17313"/>
        <dbReference type="Rhea" id="RHEA-COMP:9665"/>
        <dbReference type="Rhea" id="RHEA-COMP:9689"/>
        <dbReference type="ChEBI" id="CHEBI:15378"/>
        <dbReference type="ChEBI" id="CHEBI:30616"/>
        <dbReference type="ChEBI" id="CHEBI:33019"/>
        <dbReference type="ChEBI" id="CHEBI:57595"/>
        <dbReference type="ChEBI" id="CHEBI:78442"/>
        <dbReference type="ChEBI" id="CHEBI:78527"/>
        <dbReference type="ChEBI" id="CHEBI:456215"/>
        <dbReference type="EC" id="6.1.1.21"/>
    </reaction>
</comment>
<comment type="subunit">
    <text evidence="1">Homodimer.</text>
</comment>
<comment type="subcellular location">
    <subcellularLocation>
        <location evidence="1">Cytoplasm</location>
    </subcellularLocation>
</comment>
<comment type="similarity">
    <text evidence="1">Belongs to the class-II aminoacyl-tRNA synthetase family.</text>
</comment>
<accession>Q7WHN1</accession>
<feature type="chain" id="PRO_0000136117" description="Histidine--tRNA ligase">
    <location>
        <begin position="1"/>
        <end position="428"/>
    </location>
</feature>